<feature type="propeptide" id="PRO_0000024129" description="Leader sequence" evidence="4">
    <location>
        <begin position="1"/>
        <end position="7"/>
    </location>
</feature>
<feature type="chain" id="PRO_0000024130" description="Type IV major fimbrial protein FimA">
    <location>
        <begin position="8"/>
        <end position="161"/>
    </location>
</feature>
<feature type="transmembrane region" description="Helical" evidence="3">
    <location>
        <begin position="8"/>
        <end position="28"/>
    </location>
</feature>
<feature type="modified residue" description="N-methylphenylalanine" evidence="4">
    <location>
        <position position="8"/>
    </location>
</feature>
<feature type="disulfide bond" evidence="2">
    <location>
        <begin position="63"/>
        <end position="106"/>
    </location>
</feature>
<evidence type="ECO:0000250" key="1">
    <source>
        <dbReference type="UniProtKB" id="A5EWR9"/>
    </source>
</evidence>
<evidence type="ECO:0000250" key="2">
    <source>
        <dbReference type="UniProtKB" id="P02975"/>
    </source>
</evidence>
<evidence type="ECO:0000255" key="3"/>
<evidence type="ECO:0000255" key="4">
    <source>
        <dbReference type="PROSITE-ProRule" id="PRU01070"/>
    </source>
</evidence>
<evidence type="ECO:0000305" key="5"/>
<name>FMAX_DICNO</name>
<protein>
    <recommendedName>
        <fullName>Type IV major fimbrial protein FimA</fullName>
    </recommendedName>
    <alternativeName>
        <fullName>Pilin</fullName>
    </alternativeName>
    <alternativeName>
        <fullName>Serogroup E1</fullName>
    </alternativeName>
</protein>
<organism>
    <name type="scientific">Dichelobacter nodosus</name>
    <name type="common">Bacteroides nodosus</name>
    <dbReference type="NCBI Taxonomy" id="870"/>
    <lineage>
        <taxon>Bacteria</taxon>
        <taxon>Pseudomonadati</taxon>
        <taxon>Pseudomonadota</taxon>
        <taxon>Gammaproteobacteria</taxon>
        <taxon>Cardiobacteriales</taxon>
        <taxon>Cardiobacteriaceae</taxon>
        <taxon>Dichelobacter</taxon>
    </lineage>
</organism>
<gene>
    <name type="primary">fimA</name>
</gene>
<reference key="1">
    <citation type="journal article" date="1991" name="Mol. Microbiol.">
        <title>Gene sequences and comparison of the fimbrial subunits representative of Bacteroides nodosus serotypes A to I: class I and class II strains.</title>
        <authorList>
            <person name="Mattick J.S."/>
            <person name="Anderson B.J."/>
            <person name="Cox P.T."/>
            <person name="Dalrymple B.P."/>
            <person name="Bills M.M."/>
            <person name="Hobbs M."/>
            <person name="Egerton J.R."/>
        </authorList>
    </citation>
    <scope>NUCLEOTIDE SEQUENCE [GENOMIC DNA]</scope>
</reference>
<accession>P27906</accession>
<sequence length="161" mass="17038">MKSLQKGFTLIELMIVVAIIGILAAFAIPAYNDYIARSQAAEGLTLADGLKIRIADHLENGSCTEDANAGAGEKGNEDKGKYALAVIEGDYAQNATDLKPEDKNGCKVVITYGQGTAGSKISKLIDTKVLELEQLVNGSYTQGDATTLDAKFIPNAVKKSQ</sequence>
<proteinExistence type="inferred from homology"/>
<keyword id="KW-1015">Disulfide bond</keyword>
<keyword id="KW-0281">Fimbrium</keyword>
<keyword id="KW-0472">Membrane</keyword>
<keyword id="KW-0488">Methylation</keyword>
<keyword id="KW-0812">Transmembrane</keyword>
<keyword id="KW-1133">Transmembrane helix</keyword>
<dbReference type="EMBL" id="M32230">
    <property type="protein sequence ID" value="AAA23342.1"/>
    <property type="molecule type" value="Genomic_DNA"/>
</dbReference>
<dbReference type="PIR" id="S15268">
    <property type="entry name" value="S15268"/>
</dbReference>
<dbReference type="SMR" id="P27906"/>
<dbReference type="GO" id="GO:0016020">
    <property type="term" value="C:membrane"/>
    <property type="evidence" value="ECO:0007669"/>
    <property type="project" value="UniProtKB-SubCell"/>
</dbReference>
<dbReference type="GO" id="GO:0044096">
    <property type="term" value="C:type IV pilus"/>
    <property type="evidence" value="ECO:0007669"/>
    <property type="project" value="TreeGrafter"/>
</dbReference>
<dbReference type="GO" id="GO:0007155">
    <property type="term" value="P:cell adhesion"/>
    <property type="evidence" value="ECO:0007669"/>
    <property type="project" value="InterPro"/>
</dbReference>
<dbReference type="GO" id="GO:0043107">
    <property type="term" value="P:type IV pilus-dependent motility"/>
    <property type="evidence" value="ECO:0007669"/>
    <property type="project" value="TreeGrafter"/>
</dbReference>
<dbReference type="Gene3D" id="3.30.700.10">
    <property type="entry name" value="Glycoprotein, Type 4 Pilin"/>
    <property type="match status" value="1"/>
</dbReference>
<dbReference type="InterPro" id="IPR012902">
    <property type="entry name" value="N_methyl_site"/>
</dbReference>
<dbReference type="InterPro" id="IPR001082">
    <property type="entry name" value="Pilin"/>
</dbReference>
<dbReference type="InterPro" id="IPR045584">
    <property type="entry name" value="Pilin-like"/>
</dbReference>
<dbReference type="InterPro" id="IPR050470">
    <property type="entry name" value="T4P/T2SS_Core"/>
</dbReference>
<dbReference type="NCBIfam" id="TIGR02532">
    <property type="entry name" value="IV_pilin_GFxxxE"/>
    <property type="match status" value="1"/>
</dbReference>
<dbReference type="PANTHER" id="PTHR30093">
    <property type="entry name" value="GENERAL SECRETION PATHWAY PROTEIN G"/>
    <property type="match status" value="1"/>
</dbReference>
<dbReference type="PANTHER" id="PTHR30093:SF34">
    <property type="entry name" value="PREPILIN PEPTIDASE-DEPENDENT PROTEIN D"/>
    <property type="match status" value="1"/>
</dbReference>
<dbReference type="Pfam" id="PF07963">
    <property type="entry name" value="N_methyl"/>
    <property type="match status" value="1"/>
</dbReference>
<dbReference type="Pfam" id="PF00114">
    <property type="entry name" value="Pilin"/>
    <property type="match status" value="1"/>
</dbReference>
<dbReference type="SUPFAM" id="SSF54523">
    <property type="entry name" value="Pili subunits"/>
    <property type="match status" value="1"/>
</dbReference>
<dbReference type="PROSITE" id="PS00409">
    <property type="entry name" value="PROKAR_NTER_METHYL"/>
    <property type="match status" value="1"/>
</dbReference>
<comment type="function">
    <text evidence="1">Major component of the type IV fimbriae that plays an essential role in twitching motility, natural transformation, and protease secretion.</text>
</comment>
<comment type="subunit">
    <text>The pili are polar flexible filaments of about 5.4 nanometers diameter and 2.5 micrometers average length; they consist of only a single polypeptide chain arranged in a helical configuration of five subunits per turn in the assembled pilus.</text>
</comment>
<comment type="subcellular location">
    <subcellularLocation>
        <location evidence="1">Fimbrium</location>
    </subcellularLocation>
    <subcellularLocation>
        <location evidence="3">Membrane</location>
        <topology evidence="3">Single-pass membrane protein</topology>
    </subcellularLocation>
</comment>
<comment type="similarity">
    <text evidence="5">Belongs to the N-Me-Phe pilin family.</text>
</comment>